<feature type="chain" id="PRO_1000009739" description="dCTP deaminase">
    <location>
        <begin position="1"/>
        <end position="188"/>
    </location>
</feature>
<feature type="active site" description="Proton donor/acceptor" evidence="1">
    <location>
        <position position="137"/>
    </location>
</feature>
<feature type="binding site" evidence="1">
    <location>
        <begin position="111"/>
        <end position="116"/>
    </location>
    <ligand>
        <name>dCTP</name>
        <dbReference type="ChEBI" id="CHEBI:61481"/>
    </ligand>
</feature>
<feature type="binding site" evidence="1">
    <location>
        <begin position="135"/>
        <end position="137"/>
    </location>
    <ligand>
        <name>dCTP</name>
        <dbReference type="ChEBI" id="CHEBI:61481"/>
    </ligand>
</feature>
<feature type="binding site" evidence="1">
    <location>
        <position position="156"/>
    </location>
    <ligand>
        <name>dCTP</name>
        <dbReference type="ChEBI" id="CHEBI:61481"/>
    </ligand>
</feature>
<feature type="binding site" evidence="1">
    <location>
        <position position="170"/>
    </location>
    <ligand>
        <name>dCTP</name>
        <dbReference type="ChEBI" id="CHEBI:61481"/>
    </ligand>
</feature>
<feature type="binding site" evidence="1">
    <location>
        <position position="180"/>
    </location>
    <ligand>
        <name>dCTP</name>
        <dbReference type="ChEBI" id="CHEBI:61481"/>
    </ligand>
</feature>
<gene>
    <name evidence="1" type="primary">dcd</name>
    <name type="ordered locus">HEAR1080</name>
</gene>
<sequence length="188" mass="21154">MTIKSDKWIRRMAQETGMIEPFEPGQVRQSNGQKIVSYGTSSYGYDIRCADEFKIFTNINSTIVDPKNFDENSFVDVKSDVCIIPPNSFALARTIEYFRIPRNVLTICLGKSTYARCGIIVNVTPFEPEWEGYVTLEFSNTTPLPAKIYAGEGCAQVLFFESDEVCEVSYKDRGGKYQGQHGVTLPKA</sequence>
<proteinExistence type="inferred from homology"/>
<evidence type="ECO:0000255" key="1">
    <source>
        <dbReference type="HAMAP-Rule" id="MF_00146"/>
    </source>
</evidence>
<protein>
    <recommendedName>
        <fullName evidence="1">dCTP deaminase</fullName>
        <ecNumber evidence="1">3.5.4.13</ecNumber>
    </recommendedName>
    <alternativeName>
        <fullName evidence="1">Deoxycytidine triphosphate deaminase</fullName>
    </alternativeName>
</protein>
<name>DCD_HERAR</name>
<accession>A4G422</accession>
<keyword id="KW-0378">Hydrolase</keyword>
<keyword id="KW-0546">Nucleotide metabolism</keyword>
<keyword id="KW-0547">Nucleotide-binding</keyword>
<keyword id="KW-1185">Reference proteome</keyword>
<comment type="function">
    <text evidence="1">Catalyzes the deamination of dCTP to dUTP.</text>
</comment>
<comment type="catalytic activity">
    <reaction evidence="1">
        <text>dCTP + H2O + H(+) = dUTP + NH4(+)</text>
        <dbReference type="Rhea" id="RHEA:22680"/>
        <dbReference type="ChEBI" id="CHEBI:15377"/>
        <dbReference type="ChEBI" id="CHEBI:15378"/>
        <dbReference type="ChEBI" id="CHEBI:28938"/>
        <dbReference type="ChEBI" id="CHEBI:61481"/>
        <dbReference type="ChEBI" id="CHEBI:61555"/>
        <dbReference type="EC" id="3.5.4.13"/>
    </reaction>
</comment>
<comment type="pathway">
    <text evidence="1">Pyrimidine metabolism; dUMP biosynthesis; dUMP from dCTP (dUTP route): step 1/2.</text>
</comment>
<comment type="subunit">
    <text evidence="1">Homotrimer.</text>
</comment>
<comment type="similarity">
    <text evidence="1">Belongs to the dCTP deaminase family.</text>
</comment>
<dbReference type="EC" id="3.5.4.13" evidence="1"/>
<dbReference type="EMBL" id="CU207211">
    <property type="protein sequence ID" value="CAL61259.1"/>
    <property type="molecule type" value="Genomic_DNA"/>
</dbReference>
<dbReference type="SMR" id="A4G422"/>
<dbReference type="STRING" id="204773.HEAR1080"/>
<dbReference type="KEGG" id="har:HEAR1080"/>
<dbReference type="eggNOG" id="COG0717">
    <property type="taxonomic scope" value="Bacteria"/>
</dbReference>
<dbReference type="HOGENOM" id="CLU_087476_4_0_4"/>
<dbReference type="OrthoDB" id="9780956at2"/>
<dbReference type="UniPathway" id="UPA00610">
    <property type="reaction ID" value="UER00665"/>
</dbReference>
<dbReference type="Proteomes" id="UP000006697">
    <property type="component" value="Chromosome"/>
</dbReference>
<dbReference type="GO" id="GO:0008829">
    <property type="term" value="F:dCTP deaminase activity"/>
    <property type="evidence" value="ECO:0007669"/>
    <property type="project" value="UniProtKB-UniRule"/>
</dbReference>
<dbReference type="GO" id="GO:0000166">
    <property type="term" value="F:nucleotide binding"/>
    <property type="evidence" value="ECO:0007669"/>
    <property type="project" value="UniProtKB-KW"/>
</dbReference>
<dbReference type="GO" id="GO:0006226">
    <property type="term" value="P:dUMP biosynthetic process"/>
    <property type="evidence" value="ECO:0007669"/>
    <property type="project" value="UniProtKB-UniPathway"/>
</dbReference>
<dbReference type="GO" id="GO:0006229">
    <property type="term" value="P:dUTP biosynthetic process"/>
    <property type="evidence" value="ECO:0007669"/>
    <property type="project" value="UniProtKB-UniRule"/>
</dbReference>
<dbReference type="GO" id="GO:0015949">
    <property type="term" value="P:nucleobase-containing small molecule interconversion"/>
    <property type="evidence" value="ECO:0007669"/>
    <property type="project" value="TreeGrafter"/>
</dbReference>
<dbReference type="CDD" id="cd07557">
    <property type="entry name" value="trimeric_dUTPase"/>
    <property type="match status" value="1"/>
</dbReference>
<dbReference type="FunFam" id="2.70.40.10:FF:000001">
    <property type="entry name" value="dCTP deaminase"/>
    <property type="match status" value="1"/>
</dbReference>
<dbReference type="Gene3D" id="2.70.40.10">
    <property type="match status" value="1"/>
</dbReference>
<dbReference type="HAMAP" id="MF_00146">
    <property type="entry name" value="dCTP_deaminase"/>
    <property type="match status" value="1"/>
</dbReference>
<dbReference type="InterPro" id="IPR011962">
    <property type="entry name" value="dCTP_deaminase"/>
</dbReference>
<dbReference type="InterPro" id="IPR036157">
    <property type="entry name" value="dUTPase-like_sf"/>
</dbReference>
<dbReference type="InterPro" id="IPR033704">
    <property type="entry name" value="dUTPase_trimeric"/>
</dbReference>
<dbReference type="NCBIfam" id="TIGR02274">
    <property type="entry name" value="dCTP_deam"/>
    <property type="match status" value="1"/>
</dbReference>
<dbReference type="PANTHER" id="PTHR42680">
    <property type="entry name" value="DCTP DEAMINASE"/>
    <property type="match status" value="1"/>
</dbReference>
<dbReference type="PANTHER" id="PTHR42680:SF3">
    <property type="entry name" value="DCTP DEAMINASE"/>
    <property type="match status" value="1"/>
</dbReference>
<dbReference type="Pfam" id="PF22769">
    <property type="entry name" value="DCD"/>
    <property type="match status" value="1"/>
</dbReference>
<dbReference type="SUPFAM" id="SSF51283">
    <property type="entry name" value="dUTPase-like"/>
    <property type="match status" value="1"/>
</dbReference>
<reference key="1">
    <citation type="journal article" date="2007" name="PLoS Genet.">
        <title>A tale of two oxidation states: bacterial colonization of arsenic-rich environments.</title>
        <authorList>
            <person name="Muller D."/>
            <person name="Medigue C."/>
            <person name="Koechler S."/>
            <person name="Barbe V."/>
            <person name="Barakat M."/>
            <person name="Talla E."/>
            <person name="Bonnefoy V."/>
            <person name="Krin E."/>
            <person name="Arsene-Ploetze F."/>
            <person name="Carapito C."/>
            <person name="Chandler M."/>
            <person name="Cournoyer B."/>
            <person name="Cruveiller S."/>
            <person name="Dossat C."/>
            <person name="Duval S."/>
            <person name="Heymann M."/>
            <person name="Leize E."/>
            <person name="Lieutaud A."/>
            <person name="Lievremont D."/>
            <person name="Makita Y."/>
            <person name="Mangenot S."/>
            <person name="Nitschke W."/>
            <person name="Ortet P."/>
            <person name="Perdrial N."/>
            <person name="Schoepp B."/>
            <person name="Siguier P."/>
            <person name="Simeonova D.D."/>
            <person name="Rouy Z."/>
            <person name="Segurens B."/>
            <person name="Turlin E."/>
            <person name="Vallenet D."/>
            <person name="van Dorsselaer A."/>
            <person name="Weiss S."/>
            <person name="Weissenbach J."/>
            <person name="Lett M.-C."/>
            <person name="Danchin A."/>
            <person name="Bertin P.N."/>
        </authorList>
    </citation>
    <scope>NUCLEOTIDE SEQUENCE [LARGE SCALE GENOMIC DNA]</scope>
    <source>
        <strain>ULPAs1</strain>
    </source>
</reference>
<organism>
    <name type="scientific">Herminiimonas arsenicoxydans</name>
    <dbReference type="NCBI Taxonomy" id="204773"/>
    <lineage>
        <taxon>Bacteria</taxon>
        <taxon>Pseudomonadati</taxon>
        <taxon>Pseudomonadota</taxon>
        <taxon>Betaproteobacteria</taxon>
        <taxon>Burkholderiales</taxon>
        <taxon>Oxalobacteraceae</taxon>
        <taxon>Herminiimonas</taxon>
    </lineage>
</organism>